<organism>
    <name type="scientific">Allorhizobium ampelinum (strain ATCC BAA-846 / DSM 112012 / S4)</name>
    <name type="common">Agrobacterium vitis (strain S4)</name>
    <dbReference type="NCBI Taxonomy" id="311402"/>
    <lineage>
        <taxon>Bacteria</taxon>
        <taxon>Pseudomonadati</taxon>
        <taxon>Pseudomonadota</taxon>
        <taxon>Alphaproteobacteria</taxon>
        <taxon>Hyphomicrobiales</taxon>
        <taxon>Rhizobiaceae</taxon>
        <taxon>Rhizobium/Agrobacterium group</taxon>
        <taxon>Allorhizobium</taxon>
        <taxon>Allorhizobium ampelinum</taxon>
    </lineage>
</organism>
<comment type="function">
    <text evidence="1">Catalyzes the ATP-dependent conversion of 7-carboxy-7-deazaguanine (CDG) to 7-cyano-7-deazaguanine (preQ(0)).</text>
</comment>
<comment type="catalytic activity">
    <reaction evidence="1">
        <text>7-carboxy-7-deazaguanine + NH4(+) + ATP = 7-cyano-7-deazaguanine + ADP + phosphate + H2O + H(+)</text>
        <dbReference type="Rhea" id="RHEA:27982"/>
        <dbReference type="ChEBI" id="CHEBI:15377"/>
        <dbReference type="ChEBI" id="CHEBI:15378"/>
        <dbReference type="ChEBI" id="CHEBI:28938"/>
        <dbReference type="ChEBI" id="CHEBI:30616"/>
        <dbReference type="ChEBI" id="CHEBI:43474"/>
        <dbReference type="ChEBI" id="CHEBI:45075"/>
        <dbReference type="ChEBI" id="CHEBI:61036"/>
        <dbReference type="ChEBI" id="CHEBI:456216"/>
        <dbReference type="EC" id="6.3.4.20"/>
    </reaction>
</comment>
<comment type="cofactor">
    <cofactor evidence="1">
        <name>Zn(2+)</name>
        <dbReference type="ChEBI" id="CHEBI:29105"/>
    </cofactor>
    <text evidence="1">Binds 1 zinc ion per subunit.</text>
</comment>
<comment type="pathway">
    <text evidence="1">Purine metabolism; 7-cyano-7-deazaguanine biosynthesis.</text>
</comment>
<comment type="similarity">
    <text evidence="1">Belongs to the QueC family.</text>
</comment>
<evidence type="ECO:0000255" key="1">
    <source>
        <dbReference type="HAMAP-Rule" id="MF_01633"/>
    </source>
</evidence>
<dbReference type="EC" id="6.3.4.20" evidence="1"/>
<dbReference type="EMBL" id="CP000633">
    <property type="protein sequence ID" value="ACM37674.1"/>
    <property type="molecule type" value="Genomic_DNA"/>
</dbReference>
<dbReference type="RefSeq" id="WP_015917086.1">
    <property type="nucleotide sequence ID" value="NC_011989.1"/>
</dbReference>
<dbReference type="SMR" id="B9JS46"/>
<dbReference type="STRING" id="311402.Avi_3719"/>
<dbReference type="KEGG" id="avi:Avi_3719"/>
<dbReference type="eggNOG" id="COG0603">
    <property type="taxonomic scope" value="Bacteria"/>
</dbReference>
<dbReference type="HOGENOM" id="CLU_081854_1_0_5"/>
<dbReference type="UniPathway" id="UPA00391"/>
<dbReference type="Proteomes" id="UP000001596">
    <property type="component" value="Chromosome 1"/>
</dbReference>
<dbReference type="GO" id="GO:0005524">
    <property type="term" value="F:ATP binding"/>
    <property type="evidence" value="ECO:0007669"/>
    <property type="project" value="UniProtKB-UniRule"/>
</dbReference>
<dbReference type="GO" id="GO:0016879">
    <property type="term" value="F:ligase activity, forming carbon-nitrogen bonds"/>
    <property type="evidence" value="ECO:0007669"/>
    <property type="project" value="UniProtKB-UniRule"/>
</dbReference>
<dbReference type="GO" id="GO:0008270">
    <property type="term" value="F:zinc ion binding"/>
    <property type="evidence" value="ECO:0007669"/>
    <property type="project" value="UniProtKB-UniRule"/>
</dbReference>
<dbReference type="GO" id="GO:0008616">
    <property type="term" value="P:queuosine biosynthetic process"/>
    <property type="evidence" value="ECO:0007669"/>
    <property type="project" value="UniProtKB-UniRule"/>
</dbReference>
<dbReference type="CDD" id="cd01995">
    <property type="entry name" value="QueC-like"/>
    <property type="match status" value="1"/>
</dbReference>
<dbReference type="Gene3D" id="3.40.50.620">
    <property type="entry name" value="HUPs"/>
    <property type="match status" value="1"/>
</dbReference>
<dbReference type="HAMAP" id="MF_01633">
    <property type="entry name" value="QueC"/>
    <property type="match status" value="1"/>
</dbReference>
<dbReference type="InterPro" id="IPR018317">
    <property type="entry name" value="QueC"/>
</dbReference>
<dbReference type="InterPro" id="IPR014729">
    <property type="entry name" value="Rossmann-like_a/b/a_fold"/>
</dbReference>
<dbReference type="NCBIfam" id="TIGR00364">
    <property type="entry name" value="7-cyano-7-deazaguanine synthase QueC"/>
    <property type="match status" value="1"/>
</dbReference>
<dbReference type="PANTHER" id="PTHR42914">
    <property type="entry name" value="7-CYANO-7-DEAZAGUANINE SYNTHASE"/>
    <property type="match status" value="1"/>
</dbReference>
<dbReference type="PANTHER" id="PTHR42914:SF1">
    <property type="entry name" value="7-CYANO-7-DEAZAGUANINE SYNTHASE"/>
    <property type="match status" value="1"/>
</dbReference>
<dbReference type="Pfam" id="PF06508">
    <property type="entry name" value="QueC"/>
    <property type="match status" value="1"/>
</dbReference>
<dbReference type="PIRSF" id="PIRSF006293">
    <property type="entry name" value="ExsB"/>
    <property type="match status" value="1"/>
</dbReference>
<dbReference type="SUPFAM" id="SSF52402">
    <property type="entry name" value="Adenine nucleotide alpha hydrolases-like"/>
    <property type="match status" value="1"/>
</dbReference>
<name>QUEC_ALLAM</name>
<accession>B9JS46</accession>
<gene>
    <name evidence="1" type="primary">queC</name>
    <name type="ordered locus">Avi_3719</name>
</gene>
<keyword id="KW-0067">ATP-binding</keyword>
<keyword id="KW-0436">Ligase</keyword>
<keyword id="KW-0479">Metal-binding</keyword>
<keyword id="KW-0547">Nucleotide-binding</keyword>
<keyword id="KW-0671">Queuosine biosynthesis</keyword>
<keyword id="KW-1185">Reference proteome</keyword>
<keyword id="KW-0862">Zinc</keyword>
<reference key="1">
    <citation type="journal article" date="2009" name="J. Bacteriol.">
        <title>Genome sequences of three Agrobacterium biovars help elucidate the evolution of multichromosome genomes in bacteria.</title>
        <authorList>
            <person name="Slater S.C."/>
            <person name="Goldman B.S."/>
            <person name="Goodner B."/>
            <person name="Setubal J.C."/>
            <person name="Farrand S.K."/>
            <person name="Nester E.W."/>
            <person name="Burr T.J."/>
            <person name="Banta L."/>
            <person name="Dickerman A.W."/>
            <person name="Paulsen I."/>
            <person name="Otten L."/>
            <person name="Suen G."/>
            <person name="Welch R."/>
            <person name="Almeida N.F."/>
            <person name="Arnold F."/>
            <person name="Burton O.T."/>
            <person name="Du Z."/>
            <person name="Ewing A."/>
            <person name="Godsy E."/>
            <person name="Heisel S."/>
            <person name="Houmiel K.L."/>
            <person name="Jhaveri J."/>
            <person name="Lu J."/>
            <person name="Miller N.M."/>
            <person name="Norton S."/>
            <person name="Chen Q."/>
            <person name="Phoolcharoen W."/>
            <person name="Ohlin V."/>
            <person name="Ondrusek D."/>
            <person name="Pride N."/>
            <person name="Stricklin S.L."/>
            <person name="Sun J."/>
            <person name="Wheeler C."/>
            <person name="Wilson L."/>
            <person name="Zhu H."/>
            <person name="Wood D.W."/>
        </authorList>
    </citation>
    <scope>NUCLEOTIDE SEQUENCE [LARGE SCALE GENOMIC DNA]</scope>
    <source>
        <strain>ATCC BAA-846 / DSM 112012 / S4</strain>
    </source>
</reference>
<feature type="chain" id="PRO_1000186548" description="7-cyano-7-deazaguanine synthase">
    <location>
        <begin position="1"/>
        <end position="235"/>
    </location>
</feature>
<feature type="binding site" evidence="1">
    <location>
        <begin position="7"/>
        <end position="17"/>
    </location>
    <ligand>
        <name>ATP</name>
        <dbReference type="ChEBI" id="CHEBI:30616"/>
    </ligand>
</feature>
<feature type="binding site" evidence="1">
    <location>
        <position position="185"/>
    </location>
    <ligand>
        <name>Zn(2+)</name>
        <dbReference type="ChEBI" id="CHEBI:29105"/>
    </ligand>
</feature>
<feature type="binding site" evidence="1">
    <location>
        <position position="193"/>
    </location>
    <ligand>
        <name>Zn(2+)</name>
        <dbReference type="ChEBI" id="CHEBI:29105"/>
    </ligand>
</feature>
<feature type="binding site" evidence="1">
    <location>
        <position position="196"/>
    </location>
    <ligand>
        <name>Zn(2+)</name>
        <dbReference type="ChEBI" id="CHEBI:29105"/>
    </ligand>
</feature>
<feature type="binding site" evidence="1">
    <location>
        <position position="199"/>
    </location>
    <ligand>
        <name>Zn(2+)</name>
        <dbReference type="ChEBI" id="CHEBI:29105"/>
    </ligand>
</feature>
<proteinExistence type="inferred from homology"/>
<protein>
    <recommendedName>
        <fullName evidence="1">7-cyano-7-deazaguanine synthase</fullName>
        <ecNumber evidence="1">6.3.4.20</ecNumber>
    </recommendedName>
    <alternativeName>
        <fullName evidence="1">7-cyano-7-carbaguanine synthase</fullName>
    </alternativeName>
    <alternativeName>
        <fullName evidence="1">PreQ(0) synthase</fullName>
    </alternativeName>
    <alternativeName>
        <fullName evidence="1">Queuosine biosynthesis protein QueC</fullName>
    </alternativeName>
</protein>
<sequence length="235" mass="25280">MKILVVCSGGLDSVSLADKMAAEHELIGLISFDYGQRHKKELDFAALAAKRLGVPHQIIDMTNIGASLTGSALTDDLDVPDGHYAEETMKITVVPNRNAIMLAIAFGVAAAKKADAVALAVHGGDHFIYPDCRPGFIDAFQIMQAHALEGYADVKLLAPFVTVSKADIVTEGAKYGTPFDQTWSCYKGGARHCGRCGTCVERREAFHLAGVTDPTDYEDPDFWVSATSGFQAREV</sequence>